<reference key="1">
    <citation type="submission" date="2006-12" db="EMBL/GenBank/DDBJ databases">
        <authorList>
            <person name="Hendrix L."/>
            <person name="Mohamoud Y."/>
            <person name="Radune D."/>
            <person name="Shvartsbeyn A."/>
            <person name="Daugherty S."/>
            <person name="Dodson R."/>
            <person name="Durkin A.S."/>
            <person name="Harkins D."/>
            <person name="Huot H."/>
            <person name="Kothari S.P."/>
            <person name="Madupu R."/>
            <person name="Li J."/>
            <person name="Nelson W.C."/>
            <person name="Shrivastava S."/>
            <person name="Giglio M.G."/>
            <person name="Haft D."/>
            <person name="Selengut J."/>
            <person name="Fraser-Ligget C."/>
            <person name="Seshadri R."/>
        </authorList>
    </citation>
    <scope>NUCLEOTIDE SEQUENCE [LARGE SCALE GENOMIC DNA]</scope>
    <source>
        <strain>ATCC 35685 / KC583 / Herrer 020/F12,63</strain>
    </source>
</reference>
<gene>
    <name evidence="1" type="primary">carA</name>
    <name type="ordered locus">BARBAKC583_0972</name>
</gene>
<accession>A1UTE8</accession>
<feature type="chain" id="PRO_1000138848" description="Carbamoyl phosphate synthase small chain">
    <location>
        <begin position="1"/>
        <end position="399"/>
    </location>
</feature>
<feature type="domain" description="Glutamine amidotransferase type-1" evidence="1">
    <location>
        <begin position="208"/>
        <end position="396"/>
    </location>
</feature>
<feature type="region of interest" description="CPSase" evidence="1">
    <location>
        <begin position="1"/>
        <end position="204"/>
    </location>
</feature>
<feature type="active site" description="Nucleophile" evidence="1">
    <location>
        <position position="285"/>
    </location>
</feature>
<feature type="active site" evidence="1">
    <location>
        <position position="369"/>
    </location>
</feature>
<feature type="active site" evidence="1">
    <location>
        <position position="371"/>
    </location>
</feature>
<feature type="binding site" evidence="1">
    <location>
        <position position="60"/>
    </location>
    <ligand>
        <name>L-glutamine</name>
        <dbReference type="ChEBI" id="CHEBI:58359"/>
    </ligand>
</feature>
<feature type="binding site" evidence="1">
    <location>
        <position position="256"/>
    </location>
    <ligand>
        <name>L-glutamine</name>
        <dbReference type="ChEBI" id="CHEBI:58359"/>
    </ligand>
</feature>
<feature type="binding site" evidence="1">
    <location>
        <position position="258"/>
    </location>
    <ligand>
        <name>L-glutamine</name>
        <dbReference type="ChEBI" id="CHEBI:58359"/>
    </ligand>
</feature>
<feature type="binding site" evidence="1">
    <location>
        <position position="286"/>
    </location>
    <ligand>
        <name>L-glutamine</name>
        <dbReference type="ChEBI" id="CHEBI:58359"/>
    </ligand>
</feature>
<feature type="binding site" evidence="1">
    <location>
        <position position="289"/>
    </location>
    <ligand>
        <name>L-glutamine</name>
        <dbReference type="ChEBI" id="CHEBI:58359"/>
    </ligand>
</feature>
<feature type="binding site" evidence="1">
    <location>
        <position position="327"/>
    </location>
    <ligand>
        <name>L-glutamine</name>
        <dbReference type="ChEBI" id="CHEBI:58359"/>
    </ligand>
</feature>
<feature type="binding site" evidence="1">
    <location>
        <position position="329"/>
    </location>
    <ligand>
        <name>L-glutamine</name>
        <dbReference type="ChEBI" id="CHEBI:58359"/>
    </ligand>
</feature>
<feature type="binding site" evidence="1">
    <location>
        <position position="330"/>
    </location>
    <ligand>
        <name>L-glutamine</name>
        <dbReference type="ChEBI" id="CHEBI:58359"/>
    </ligand>
</feature>
<evidence type="ECO:0000255" key="1">
    <source>
        <dbReference type="HAMAP-Rule" id="MF_01209"/>
    </source>
</evidence>
<comment type="function">
    <text evidence="1">Small subunit of the glutamine-dependent carbamoyl phosphate synthetase (CPSase). CPSase catalyzes the formation of carbamoyl phosphate from the ammonia moiety of glutamine, carbonate, and phosphate donated by ATP, constituting the first step of 2 biosynthetic pathways, one leading to arginine and/or urea and the other to pyrimidine nucleotides. The small subunit (glutamine amidotransferase) binds and cleaves glutamine to supply the large subunit with the substrate ammonia.</text>
</comment>
<comment type="catalytic activity">
    <reaction evidence="1">
        <text>hydrogencarbonate + L-glutamine + 2 ATP + H2O = carbamoyl phosphate + L-glutamate + 2 ADP + phosphate + 2 H(+)</text>
        <dbReference type="Rhea" id="RHEA:18633"/>
        <dbReference type="ChEBI" id="CHEBI:15377"/>
        <dbReference type="ChEBI" id="CHEBI:15378"/>
        <dbReference type="ChEBI" id="CHEBI:17544"/>
        <dbReference type="ChEBI" id="CHEBI:29985"/>
        <dbReference type="ChEBI" id="CHEBI:30616"/>
        <dbReference type="ChEBI" id="CHEBI:43474"/>
        <dbReference type="ChEBI" id="CHEBI:58228"/>
        <dbReference type="ChEBI" id="CHEBI:58359"/>
        <dbReference type="ChEBI" id="CHEBI:456216"/>
        <dbReference type="EC" id="6.3.5.5"/>
    </reaction>
</comment>
<comment type="catalytic activity">
    <molecule>Carbamoyl phosphate synthase small chain</molecule>
    <reaction evidence="1">
        <text>L-glutamine + H2O = L-glutamate + NH4(+)</text>
        <dbReference type="Rhea" id="RHEA:15889"/>
        <dbReference type="ChEBI" id="CHEBI:15377"/>
        <dbReference type="ChEBI" id="CHEBI:28938"/>
        <dbReference type="ChEBI" id="CHEBI:29985"/>
        <dbReference type="ChEBI" id="CHEBI:58359"/>
    </reaction>
</comment>
<comment type="pathway">
    <text evidence="1">Amino-acid biosynthesis; L-arginine biosynthesis; carbamoyl phosphate from bicarbonate: step 1/1.</text>
</comment>
<comment type="pathway">
    <text evidence="1">Pyrimidine metabolism; UMP biosynthesis via de novo pathway; (S)-dihydroorotate from bicarbonate: step 1/3.</text>
</comment>
<comment type="subunit">
    <text evidence="1">Composed of two chains; the small (or glutamine) chain promotes the hydrolysis of glutamine to ammonia, which is used by the large (or ammonia) chain to synthesize carbamoyl phosphate. Tetramer of heterodimers (alpha,beta)4.</text>
</comment>
<comment type="similarity">
    <text evidence="1">Belongs to the CarA family.</text>
</comment>
<dbReference type="EC" id="6.3.5.5" evidence="1"/>
<dbReference type="EMBL" id="CP000524">
    <property type="protein sequence ID" value="ABM45277.1"/>
    <property type="molecule type" value="Genomic_DNA"/>
</dbReference>
<dbReference type="RefSeq" id="WP_005767468.1">
    <property type="nucleotide sequence ID" value="NC_008783.1"/>
</dbReference>
<dbReference type="SMR" id="A1UTE8"/>
<dbReference type="STRING" id="360095.BARBAKC583_0972"/>
<dbReference type="GeneID" id="4684054"/>
<dbReference type="KEGG" id="bbk:BARBAKC583_0972"/>
<dbReference type="PATRIC" id="fig|360095.6.peg.942"/>
<dbReference type="eggNOG" id="COG0505">
    <property type="taxonomic scope" value="Bacteria"/>
</dbReference>
<dbReference type="HOGENOM" id="CLU_035901_2_2_5"/>
<dbReference type="OrthoDB" id="9804328at2"/>
<dbReference type="UniPathway" id="UPA00068">
    <property type="reaction ID" value="UER00171"/>
</dbReference>
<dbReference type="UniPathway" id="UPA00070">
    <property type="reaction ID" value="UER00115"/>
</dbReference>
<dbReference type="Proteomes" id="UP000000643">
    <property type="component" value="Chromosome"/>
</dbReference>
<dbReference type="GO" id="GO:0005524">
    <property type="term" value="F:ATP binding"/>
    <property type="evidence" value="ECO:0007669"/>
    <property type="project" value="UniProtKB-UniRule"/>
</dbReference>
<dbReference type="GO" id="GO:0004088">
    <property type="term" value="F:carbamoyl-phosphate synthase (glutamine-hydrolyzing) activity"/>
    <property type="evidence" value="ECO:0007669"/>
    <property type="project" value="UniProtKB-UniRule"/>
</dbReference>
<dbReference type="GO" id="GO:0004359">
    <property type="term" value="F:glutaminase activity"/>
    <property type="evidence" value="ECO:0007669"/>
    <property type="project" value="RHEA"/>
</dbReference>
<dbReference type="GO" id="GO:0006207">
    <property type="term" value="P:'de novo' pyrimidine nucleobase biosynthetic process"/>
    <property type="evidence" value="ECO:0007669"/>
    <property type="project" value="InterPro"/>
</dbReference>
<dbReference type="GO" id="GO:0044205">
    <property type="term" value="P:'de novo' UMP biosynthetic process"/>
    <property type="evidence" value="ECO:0007669"/>
    <property type="project" value="UniProtKB-UniRule"/>
</dbReference>
<dbReference type="GO" id="GO:0006541">
    <property type="term" value="P:glutamine metabolic process"/>
    <property type="evidence" value="ECO:0007669"/>
    <property type="project" value="InterPro"/>
</dbReference>
<dbReference type="GO" id="GO:0006526">
    <property type="term" value="P:L-arginine biosynthetic process"/>
    <property type="evidence" value="ECO:0007669"/>
    <property type="project" value="UniProtKB-UniRule"/>
</dbReference>
<dbReference type="CDD" id="cd01744">
    <property type="entry name" value="GATase1_CPSase"/>
    <property type="match status" value="1"/>
</dbReference>
<dbReference type="Gene3D" id="3.40.50.880">
    <property type="match status" value="1"/>
</dbReference>
<dbReference type="Gene3D" id="3.50.30.20">
    <property type="entry name" value="Carbamoyl-phosphate synthase small subunit, N-terminal domain"/>
    <property type="match status" value="1"/>
</dbReference>
<dbReference type="HAMAP" id="MF_01209">
    <property type="entry name" value="CPSase_S_chain"/>
    <property type="match status" value="1"/>
</dbReference>
<dbReference type="InterPro" id="IPR050472">
    <property type="entry name" value="Anth_synth/Amidotransfase"/>
</dbReference>
<dbReference type="InterPro" id="IPR006274">
    <property type="entry name" value="CarbamoylP_synth_ssu"/>
</dbReference>
<dbReference type="InterPro" id="IPR002474">
    <property type="entry name" value="CarbamoylP_synth_ssu_N"/>
</dbReference>
<dbReference type="InterPro" id="IPR036480">
    <property type="entry name" value="CarbP_synth_ssu_N_sf"/>
</dbReference>
<dbReference type="InterPro" id="IPR029062">
    <property type="entry name" value="Class_I_gatase-like"/>
</dbReference>
<dbReference type="InterPro" id="IPR035686">
    <property type="entry name" value="CPSase_GATase1"/>
</dbReference>
<dbReference type="InterPro" id="IPR017926">
    <property type="entry name" value="GATASE"/>
</dbReference>
<dbReference type="NCBIfam" id="TIGR01368">
    <property type="entry name" value="CPSaseIIsmall"/>
    <property type="match status" value="1"/>
</dbReference>
<dbReference type="NCBIfam" id="NF009475">
    <property type="entry name" value="PRK12838.1"/>
    <property type="match status" value="1"/>
</dbReference>
<dbReference type="PANTHER" id="PTHR43418:SF7">
    <property type="entry name" value="CARBAMOYL-PHOSPHATE SYNTHASE SMALL CHAIN"/>
    <property type="match status" value="1"/>
</dbReference>
<dbReference type="PANTHER" id="PTHR43418">
    <property type="entry name" value="MULTIFUNCTIONAL TRYPTOPHAN BIOSYNTHESIS PROTEIN-RELATED"/>
    <property type="match status" value="1"/>
</dbReference>
<dbReference type="Pfam" id="PF00988">
    <property type="entry name" value="CPSase_sm_chain"/>
    <property type="match status" value="1"/>
</dbReference>
<dbReference type="Pfam" id="PF00117">
    <property type="entry name" value="GATase"/>
    <property type="match status" value="1"/>
</dbReference>
<dbReference type="PRINTS" id="PR00097">
    <property type="entry name" value="ANTSNTHASEII"/>
</dbReference>
<dbReference type="PRINTS" id="PR00099">
    <property type="entry name" value="CPSGATASE"/>
</dbReference>
<dbReference type="PRINTS" id="PR00096">
    <property type="entry name" value="GATASE"/>
</dbReference>
<dbReference type="SMART" id="SM01097">
    <property type="entry name" value="CPSase_sm_chain"/>
    <property type="match status" value="1"/>
</dbReference>
<dbReference type="SUPFAM" id="SSF52021">
    <property type="entry name" value="Carbamoyl phosphate synthetase, small subunit N-terminal domain"/>
    <property type="match status" value="1"/>
</dbReference>
<dbReference type="SUPFAM" id="SSF52317">
    <property type="entry name" value="Class I glutamine amidotransferase-like"/>
    <property type="match status" value="1"/>
</dbReference>
<dbReference type="PROSITE" id="PS51273">
    <property type="entry name" value="GATASE_TYPE_1"/>
    <property type="match status" value="1"/>
</dbReference>
<protein>
    <recommendedName>
        <fullName evidence="1">Carbamoyl phosphate synthase small chain</fullName>
        <ecNumber evidence="1">6.3.5.5</ecNumber>
    </recommendedName>
    <alternativeName>
        <fullName evidence="1">Carbamoyl phosphate synthetase glutamine chain</fullName>
    </alternativeName>
</protein>
<sequence>MTKTTLSSDPWSIKKPTALLVLADGTVIEGEGIGAIGIVEAEVCFNTAITGYEEILTDPSYTGQIINFTFPHIGNVGTNSEDIEDLTPLHHYGAVGAIFKAHSSPSNYRANENLNQWLKKHQIIALCGIDTRALTALIREKGAQNAVIAHDPNGNFDINALKERAQKWSGLLNLDLAKEVTSKQSIEWNEKPWIWNKGYTINNEYNFHIVAIDYGIKRNILRLMAAQGARITVVPAHTSVQEILAMKPDGIFLSNGPGDPNATAEYAVPMIKTFIECNIPLFGICLGHQLLALAVGAKTIKMHQGHHGANHPVKNLITEKVEITSMNHGFTVDSTSLPQYVEETHISLFDSTNCGIQIIGKPAFSVQYHPEASPGPQDSHYLFQRFHDLIVNYREQSNK</sequence>
<proteinExistence type="inferred from homology"/>
<name>CARA_BARBK</name>
<organism>
    <name type="scientific">Bartonella bacilliformis (strain ATCC 35685 / KC583 / Herrer 020/F12,63)</name>
    <dbReference type="NCBI Taxonomy" id="360095"/>
    <lineage>
        <taxon>Bacteria</taxon>
        <taxon>Pseudomonadati</taxon>
        <taxon>Pseudomonadota</taxon>
        <taxon>Alphaproteobacteria</taxon>
        <taxon>Hyphomicrobiales</taxon>
        <taxon>Bartonellaceae</taxon>
        <taxon>Bartonella</taxon>
    </lineage>
</organism>
<keyword id="KW-0028">Amino-acid biosynthesis</keyword>
<keyword id="KW-0055">Arginine biosynthesis</keyword>
<keyword id="KW-0067">ATP-binding</keyword>
<keyword id="KW-0315">Glutamine amidotransferase</keyword>
<keyword id="KW-0436">Ligase</keyword>
<keyword id="KW-0547">Nucleotide-binding</keyword>
<keyword id="KW-0665">Pyrimidine biosynthesis</keyword>